<comment type="function">
    <text evidence="1">Catalyzes the thiamine diphosphate-dependent decarboxylation of 2-oxoglutarate and the subsequent addition of the resulting succinic semialdehyde-thiamine pyrophosphate anion to isochorismate to yield 2-succinyl-5-enolpyruvyl-6-hydroxy-3-cyclohexene-1-carboxylate (SEPHCHC).</text>
</comment>
<comment type="catalytic activity">
    <reaction evidence="1">
        <text>isochorismate + 2-oxoglutarate + H(+) = 5-enolpyruvoyl-6-hydroxy-2-succinyl-cyclohex-3-ene-1-carboxylate + CO2</text>
        <dbReference type="Rhea" id="RHEA:25593"/>
        <dbReference type="ChEBI" id="CHEBI:15378"/>
        <dbReference type="ChEBI" id="CHEBI:16526"/>
        <dbReference type="ChEBI" id="CHEBI:16810"/>
        <dbReference type="ChEBI" id="CHEBI:29780"/>
        <dbReference type="ChEBI" id="CHEBI:58818"/>
        <dbReference type="EC" id="2.2.1.9"/>
    </reaction>
</comment>
<comment type="cofactor">
    <cofactor evidence="1">
        <name>Mg(2+)</name>
        <dbReference type="ChEBI" id="CHEBI:18420"/>
    </cofactor>
    <cofactor evidence="1">
        <name>Mn(2+)</name>
        <dbReference type="ChEBI" id="CHEBI:29035"/>
    </cofactor>
</comment>
<comment type="cofactor">
    <cofactor evidence="1">
        <name>thiamine diphosphate</name>
        <dbReference type="ChEBI" id="CHEBI:58937"/>
    </cofactor>
    <text evidence="1">Binds 1 thiamine pyrophosphate per subunit.</text>
</comment>
<comment type="pathway">
    <text evidence="1">Quinol/quinone metabolism; 1,4-dihydroxy-2-naphthoate biosynthesis; 1,4-dihydroxy-2-naphthoate from chorismate: step 2/7.</text>
</comment>
<comment type="pathway">
    <text evidence="1">Quinol/quinone metabolism; menaquinone biosynthesis.</text>
</comment>
<comment type="subunit">
    <text evidence="1">Homodimer.</text>
</comment>
<comment type="similarity">
    <text evidence="1">Belongs to the TPP enzyme family. MenD subfamily.</text>
</comment>
<feature type="chain" id="PRO_0000341706" description="2-succinyl-5-enolpyruvyl-6-hydroxy-3-cyclohexene-1-carboxylate synthase">
    <location>
        <begin position="1"/>
        <end position="584"/>
    </location>
</feature>
<name>MEND_BACCR</name>
<proteinExistence type="inferred from homology"/>
<dbReference type="EC" id="2.2.1.9" evidence="1"/>
<dbReference type="EMBL" id="AE016877">
    <property type="protein sequence ID" value="AAP11755.1"/>
    <property type="molecule type" value="Genomic_DNA"/>
</dbReference>
<dbReference type="RefSeq" id="NP_834554.1">
    <property type="nucleotide sequence ID" value="NC_004722.1"/>
</dbReference>
<dbReference type="RefSeq" id="WP_001059197.1">
    <property type="nucleotide sequence ID" value="NC_004722.1"/>
</dbReference>
<dbReference type="SMR" id="Q816H7"/>
<dbReference type="STRING" id="226900.BC_4855"/>
<dbReference type="KEGG" id="bce:BC4855"/>
<dbReference type="PATRIC" id="fig|226900.8.peg.5026"/>
<dbReference type="HOGENOM" id="CLU_006051_3_0_9"/>
<dbReference type="UniPathway" id="UPA00079"/>
<dbReference type="UniPathway" id="UPA01057">
    <property type="reaction ID" value="UER00164"/>
</dbReference>
<dbReference type="Proteomes" id="UP000001417">
    <property type="component" value="Chromosome"/>
</dbReference>
<dbReference type="GO" id="GO:0070204">
    <property type="term" value="F:2-succinyl-5-enolpyruvyl-6-hydroxy-3-cyclohexene-1-carboxylic-acid synthase activity"/>
    <property type="evidence" value="ECO:0007669"/>
    <property type="project" value="UniProtKB-UniRule"/>
</dbReference>
<dbReference type="GO" id="GO:0000287">
    <property type="term" value="F:magnesium ion binding"/>
    <property type="evidence" value="ECO:0007669"/>
    <property type="project" value="UniProtKB-UniRule"/>
</dbReference>
<dbReference type="GO" id="GO:0030145">
    <property type="term" value="F:manganese ion binding"/>
    <property type="evidence" value="ECO:0007669"/>
    <property type="project" value="UniProtKB-UniRule"/>
</dbReference>
<dbReference type="GO" id="GO:0030976">
    <property type="term" value="F:thiamine pyrophosphate binding"/>
    <property type="evidence" value="ECO:0007669"/>
    <property type="project" value="UniProtKB-UniRule"/>
</dbReference>
<dbReference type="GO" id="GO:0009234">
    <property type="term" value="P:menaquinone biosynthetic process"/>
    <property type="evidence" value="ECO:0007669"/>
    <property type="project" value="UniProtKB-UniRule"/>
</dbReference>
<dbReference type="CDD" id="cd07037">
    <property type="entry name" value="TPP_PYR_MenD"/>
    <property type="match status" value="1"/>
</dbReference>
<dbReference type="CDD" id="cd02009">
    <property type="entry name" value="TPP_SHCHC_synthase"/>
    <property type="match status" value="1"/>
</dbReference>
<dbReference type="Gene3D" id="3.40.50.970">
    <property type="match status" value="2"/>
</dbReference>
<dbReference type="Gene3D" id="3.40.50.1220">
    <property type="entry name" value="TPP-binding domain"/>
    <property type="match status" value="1"/>
</dbReference>
<dbReference type="HAMAP" id="MF_01659">
    <property type="entry name" value="MenD"/>
    <property type="match status" value="1"/>
</dbReference>
<dbReference type="InterPro" id="IPR029035">
    <property type="entry name" value="DHS-like_NAD/FAD-binding_dom"/>
</dbReference>
<dbReference type="InterPro" id="IPR004433">
    <property type="entry name" value="MenaQ_synth_MenD"/>
</dbReference>
<dbReference type="InterPro" id="IPR032264">
    <property type="entry name" value="MenD_middle"/>
</dbReference>
<dbReference type="InterPro" id="IPR029061">
    <property type="entry name" value="THDP-binding"/>
</dbReference>
<dbReference type="InterPro" id="IPR012001">
    <property type="entry name" value="Thiamin_PyroP_enz_TPP-bd_dom"/>
</dbReference>
<dbReference type="InterPro" id="IPR011766">
    <property type="entry name" value="TPP_enzyme_TPP-bd"/>
</dbReference>
<dbReference type="NCBIfam" id="TIGR00173">
    <property type="entry name" value="menD"/>
    <property type="match status" value="1"/>
</dbReference>
<dbReference type="PANTHER" id="PTHR42916">
    <property type="entry name" value="2-SUCCINYL-5-ENOLPYRUVYL-6-HYDROXY-3-CYCLOHEXENE-1-CARBOXYLATE SYNTHASE"/>
    <property type="match status" value="1"/>
</dbReference>
<dbReference type="PANTHER" id="PTHR42916:SF1">
    <property type="entry name" value="PROTEIN PHYLLO, CHLOROPLASTIC"/>
    <property type="match status" value="1"/>
</dbReference>
<dbReference type="Pfam" id="PF02775">
    <property type="entry name" value="TPP_enzyme_C"/>
    <property type="match status" value="1"/>
</dbReference>
<dbReference type="Pfam" id="PF16582">
    <property type="entry name" value="TPP_enzyme_M_2"/>
    <property type="match status" value="1"/>
</dbReference>
<dbReference type="Pfam" id="PF02776">
    <property type="entry name" value="TPP_enzyme_N"/>
    <property type="match status" value="1"/>
</dbReference>
<dbReference type="PIRSF" id="PIRSF004983">
    <property type="entry name" value="MenD"/>
    <property type="match status" value="1"/>
</dbReference>
<dbReference type="SUPFAM" id="SSF52467">
    <property type="entry name" value="DHS-like NAD/FAD-binding domain"/>
    <property type="match status" value="1"/>
</dbReference>
<dbReference type="SUPFAM" id="SSF52518">
    <property type="entry name" value="Thiamin diphosphate-binding fold (THDP-binding)"/>
    <property type="match status" value="2"/>
</dbReference>
<evidence type="ECO:0000255" key="1">
    <source>
        <dbReference type="HAMAP-Rule" id="MF_01659"/>
    </source>
</evidence>
<protein>
    <recommendedName>
        <fullName evidence="1">2-succinyl-5-enolpyruvyl-6-hydroxy-3-cyclohexene-1-carboxylate synthase</fullName>
        <shortName evidence="1">SEPHCHC synthase</shortName>
        <ecNumber evidence="1">2.2.1.9</ecNumber>
    </recommendedName>
    <alternativeName>
        <fullName evidence="1">Menaquinone biosynthesis protein MenD</fullName>
    </alternativeName>
</protein>
<organism>
    <name type="scientific">Bacillus cereus (strain ATCC 14579 / DSM 31 / CCUG 7414 / JCM 2152 / NBRC 15305 / NCIMB 9373 / NCTC 2599 / NRRL B-3711)</name>
    <dbReference type="NCBI Taxonomy" id="226900"/>
    <lineage>
        <taxon>Bacteria</taxon>
        <taxon>Bacillati</taxon>
        <taxon>Bacillota</taxon>
        <taxon>Bacilli</taxon>
        <taxon>Bacillales</taxon>
        <taxon>Bacillaceae</taxon>
        <taxon>Bacillus</taxon>
        <taxon>Bacillus cereus group</taxon>
    </lineage>
</organism>
<keyword id="KW-0460">Magnesium</keyword>
<keyword id="KW-0464">Manganese</keyword>
<keyword id="KW-0474">Menaquinone biosynthesis</keyword>
<keyword id="KW-0479">Metal-binding</keyword>
<keyword id="KW-1185">Reference proteome</keyword>
<keyword id="KW-0786">Thiamine pyrophosphate</keyword>
<keyword id="KW-0808">Transferase</keyword>
<sequence>MNNHIEALSYYLGAFVDELTRLDVCDVVISPGSRSTPIALLMEQHEGMNTYLHVDERSAGFFALGIAKAKKRPVALLCTSGTAAANYYPAVCEAFHSRVPLIVLTADRPHELRDVGAPQAMNQFNLYGTFVKQFTEMALPEASEAMYHYARMTTQRIVANACLAPQGPVHLNFPVREPLIPDFSLESLWDKGRSEYTGVVQQGNAVMPSEYVDSLVGRLSHMEKGLIICGDDSHAEIAMFATQLAEKTGYPILADPLSNIRSGHHDKTMVIDCYDTFLRNEKLKETWNGDVLIRFGGMPVSKSLTQFIKKQTKAVHIVVDESGQWRDPALVATEVVQASDIEFCKAAIEKMPVMKKNDWSLMWQHINEKTKETLREMETYETAFEGKVITDIVRVLPEDATLFASNSMPIRDTDSFFFTSDKNIHVMANRGVNGIDGIISTALGASVICDPLVLVIGDLSFYHDLNGLLAAKLHELNITIVVVNNDGGGIFSFLPQYEKKEHFESLFGTPIGLDYEHVVKMYGGSFSRVNGWEQFREEVRKGTTTEGLHVVEICTNRDENLTLHRTLWAKTMDVITTSLQGESK</sequence>
<accession>Q816H7</accession>
<reference key="1">
    <citation type="journal article" date="2003" name="Nature">
        <title>Genome sequence of Bacillus cereus and comparative analysis with Bacillus anthracis.</title>
        <authorList>
            <person name="Ivanova N."/>
            <person name="Sorokin A."/>
            <person name="Anderson I."/>
            <person name="Galleron N."/>
            <person name="Candelon B."/>
            <person name="Kapatral V."/>
            <person name="Bhattacharyya A."/>
            <person name="Reznik G."/>
            <person name="Mikhailova N."/>
            <person name="Lapidus A."/>
            <person name="Chu L."/>
            <person name="Mazur M."/>
            <person name="Goltsman E."/>
            <person name="Larsen N."/>
            <person name="D'Souza M."/>
            <person name="Walunas T."/>
            <person name="Grechkin Y."/>
            <person name="Pusch G."/>
            <person name="Haselkorn R."/>
            <person name="Fonstein M."/>
            <person name="Ehrlich S.D."/>
            <person name="Overbeek R."/>
            <person name="Kyrpides N.C."/>
        </authorList>
    </citation>
    <scope>NUCLEOTIDE SEQUENCE [LARGE SCALE GENOMIC DNA]</scope>
    <source>
        <strain>ATCC 14579 / DSM 31 / CCUG 7414 / JCM 2152 / NBRC 15305 / NCIMB 9373 / NCTC 2599 / NRRL B-3711</strain>
    </source>
</reference>
<gene>
    <name evidence="1" type="primary">menD</name>
    <name type="ordered locus">BC_4855</name>
</gene>